<feature type="chain" id="PRO_0000089653" description="Chromate transport protein">
    <location>
        <begin position="1"/>
        <end position="416"/>
    </location>
</feature>
<feature type="transmembrane region" description="Helical" evidence="1">
    <location>
        <begin position="99"/>
        <end position="119"/>
    </location>
</feature>
<feature type="transmembrane region" description="Helical" evidence="1">
    <location>
        <begin position="128"/>
        <end position="148"/>
    </location>
</feature>
<feature type="transmembrane region" description="Helical" evidence="1">
    <location>
        <begin position="160"/>
        <end position="177"/>
    </location>
</feature>
<feature type="transmembrane region" description="Helical" evidence="1">
    <location>
        <begin position="181"/>
        <end position="198"/>
    </location>
</feature>
<feature type="transmembrane region" description="Helical" evidence="1">
    <location>
        <begin position="204"/>
        <end position="224"/>
    </location>
</feature>
<feature type="transmembrane region" description="Helical" evidence="1">
    <location>
        <begin position="237"/>
        <end position="257"/>
    </location>
</feature>
<feature type="transmembrane region" description="Helical" evidence="1">
    <location>
        <begin position="283"/>
        <end position="303"/>
    </location>
</feature>
<feature type="transmembrane region" description="Helical" evidence="1">
    <location>
        <begin position="308"/>
        <end position="328"/>
    </location>
</feature>
<feature type="transmembrane region" description="Helical" evidence="1">
    <location>
        <begin position="341"/>
        <end position="361"/>
    </location>
</feature>
<feature type="transmembrane region" description="Helical" evidence="1">
    <location>
        <begin position="371"/>
        <end position="391"/>
    </location>
</feature>
<feature type="transmembrane region" description="Helical" evidence="1">
    <location>
        <begin position="395"/>
        <end position="415"/>
    </location>
</feature>
<feature type="region of interest" description="Disordered" evidence="2">
    <location>
        <begin position="1"/>
        <end position="21"/>
    </location>
</feature>
<keyword id="KW-0997">Cell inner membrane</keyword>
<keyword id="KW-1003">Cell membrane</keyword>
<keyword id="KW-0155">Chromate resistance</keyword>
<keyword id="KW-0472">Membrane</keyword>
<keyword id="KW-0614">Plasmid</keyword>
<keyword id="KW-0812">Transmembrane</keyword>
<keyword id="KW-1133">Transmembrane helix</keyword>
<keyword id="KW-0813">Transport</keyword>
<reference key="1">
    <citation type="journal article" date="1990" name="J. Bacteriol.">
        <title>Cloning, nucleotide sequence, and expression of the chromate resistance determinant of Pseudomonas aeruginosa plasmid pUM505.</title>
        <authorList>
            <person name="Cervantes C."/>
            <person name="Ohtake H."/>
            <person name="Chu L."/>
            <person name="Misra T.K."/>
            <person name="Silver S."/>
        </authorList>
    </citation>
    <scope>NUCLEOTIDE SEQUENCE [GENOMIC DNA]</scope>
    <scope>FUNCTION</scope>
    <scope>INDUCTION</scope>
</reference>
<sequence length="416" mass="44060">MSVANEESYRPSKATDATTEAVPPPMSYPQLFARFLKFGLLAWGGPVAQIDMLRRELVDEERWISSKRFNKLLAVMQVLPGPEAHEICVHLGIRAKGRLGGVLAGLGFMLPGFLLMFALSWLYFQIEFVGTALGAAFLGVQAAVIALIVRAVHRIGEHILLDRWLWVIAIVCALAAIGRVDFWITLPAGGLVYALLVLNHRASALLVTLAAVALAAAVALWAAPTAKLVEAVVQGQASVLLIFASGLKAGLLTFGGAYTAIPFVRNDAVGRGWMTDGQFLDGLALSGVLPAPLIIFATFVGYVAGGPIGAVAMTVGVFLPAFAFSLIFYDRLEAVVENKRLHAFLDGVAAGVVGLIGATTIDLAQVTAERVPSLTVGMSIFAAGLAFLYAWKNKLNVVVVILAAGLAGWLVFPNQG</sequence>
<dbReference type="EMBL" id="M29034">
    <property type="protein sequence ID" value="AAA88432.1"/>
    <property type="molecule type" value="Genomic_DNA"/>
</dbReference>
<dbReference type="RefSeq" id="WP_003117270.1">
    <property type="nucleotide sequence ID" value="NZ_VKLB01000041.1"/>
</dbReference>
<dbReference type="RefSeq" id="YP_004928064.1">
    <property type="nucleotide sequence ID" value="NC_016138.1"/>
</dbReference>
<dbReference type="TCDB" id="2.A.51.1.3">
    <property type="family name" value="the chromate ion transporter (chr) family"/>
</dbReference>
<dbReference type="GO" id="GO:0005886">
    <property type="term" value="C:plasma membrane"/>
    <property type="evidence" value="ECO:0007669"/>
    <property type="project" value="UniProtKB-SubCell"/>
</dbReference>
<dbReference type="GO" id="GO:0015109">
    <property type="term" value="F:chromate transmembrane transporter activity"/>
    <property type="evidence" value="ECO:0007669"/>
    <property type="project" value="InterPro"/>
</dbReference>
<dbReference type="GO" id="GO:0046687">
    <property type="term" value="P:response to chromate"/>
    <property type="evidence" value="ECO:0007669"/>
    <property type="project" value="UniProtKB-KW"/>
</dbReference>
<dbReference type="InterPro" id="IPR014047">
    <property type="entry name" value="Chr_Tranpt_l_chain"/>
</dbReference>
<dbReference type="InterPro" id="IPR003370">
    <property type="entry name" value="Chromate_transpt"/>
</dbReference>
<dbReference type="NCBIfam" id="TIGR00937">
    <property type="entry name" value="2A51"/>
    <property type="match status" value="1"/>
</dbReference>
<dbReference type="PANTHER" id="PTHR33567">
    <property type="entry name" value="CHROMATE ION TRANSPORTER (EUROFUNG)"/>
    <property type="match status" value="1"/>
</dbReference>
<dbReference type="PANTHER" id="PTHR33567:SF3">
    <property type="entry name" value="CHROMATE ION TRANSPORTER (EUROFUNG)"/>
    <property type="match status" value="1"/>
</dbReference>
<dbReference type="Pfam" id="PF02417">
    <property type="entry name" value="Chromate_transp"/>
    <property type="match status" value="2"/>
</dbReference>
<dbReference type="PIRSF" id="PIRSF004810">
    <property type="entry name" value="ChrA"/>
    <property type="match status" value="1"/>
</dbReference>
<geneLocation type="plasmid">
    <name>pUM505</name>
</geneLocation>
<gene>
    <name evidence="4" type="primary">chrA</name>
</gene>
<accession>P14285</accession>
<name>CHRA_PSEAI</name>
<protein>
    <recommendedName>
        <fullName evidence="5">Chromate transport protein</fullName>
    </recommendedName>
</protein>
<organism>
    <name type="scientific">Pseudomonas aeruginosa</name>
    <dbReference type="NCBI Taxonomy" id="287"/>
    <lineage>
        <taxon>Bacteria</taxon>
        <taxon>Pseudomonadati</taxon>
        <taxon>Pseudomonadota</taxon>
        <taxon>Gammaproteobacteria</taxon>
        <taxon>Pseudomonadales</taxon>
        <taxon>Pseudomonadaceae</taxon>
        <taxon>Pseudomonas</taxon>
    </lineage>
</organism>
<comment type="function">
    <text evidence="3">This protein reduces chromate accumulation and is essential for chromate resistance.</text>
</comment>
<comment type="subcellular location">
    <subcellularLocation>
        <location evidence="6">Cell inner membrane</location>
        <topology evidence="1">Multi-pass membrane protein</topology>
    </subcellularLocation>
</comment>
<comment type="induction">
    <text evidence="3">By chromate.</text>
</comment>
<comment type="similarity">
    <text evidence="5">Belongs to the chromate ion transporter (CHR) (TC 2.A.51) family.</text>
</comment>
<evidence type="ECO:0000255" key="1"/>
<evidence type="ECO:0000256" key="2">
    <source>
        <dbReference type="SAM" id="MobiDB-lite"/>
    </source>
</evidence>
<evidence type="ECO:0000269" key="3">
    <source>
    </source>
</evidence>
<evidence type="ECO:0000303" key="4">
    <source>
    </source>
</evidence>
<evidence type="ECO:0000305" key="5"/>
<evidence type="ECO:0000305" key="6">
    <source>
    </source>
</evidence>
<proteinExistence type="evidence at transcript level"/>